<dbReference type="GO" id="GO:0007218">
    <property type="term" value="P:neuropeptide signaling pathway"/>
    <property type="evidence" value="ECO:0007669"/>
    <property type="project" value="UniProtKB-KW"/>
</dbReference>
<keyword id="KW-0027">Amidation</keyword>
<keyword id="KW-0903">Direct protein sequencing</keyword>
<keyword id="KW-0527">Neuropeptide</keyword>
<feature type="peptide" id="PRO_0000044183" description="Oviductal motility-stimulating peptide">
    <location>
        <begin position="1"/>
        <end position="6"/>
    </location>
</feature>
<feature type="modified residue" description="Glutamic acid 1-amide" evidence="1">
    <location>
        <position position="6"/>
    </location>
</feature>
<comment type="function">
    <text>Myotropic peptide. Stimulates the contractions of the oviduct.</text>
</comment>
<proteinExistence type="evidence at protein level"/>
<sequence length="6" mass="720">IAYKPE</sequence>
<accession>P42985</accession>
<organism>
    <name type="scientific">Leptinotarsa decemlineata</name>
    <name type="common">Colorado potato beetle</name>
    <name type="synonym">Doryphora decemlineata</name>
    <dbReference type="NCBI Taxonomy" id="7539"/>
    <lineage>
        <taxon>Eukaryota</taxon>
        <taxon>Metazoa</taxon>
        <taxon>Ecdysozoa</taxon>
        <taxon>Arthropoda</taxon>
        <taxon>Hexapoda</taxon>
        <taxon>Insecta</taxon>
        <taxon>Pterygota</taxon>
        <taxon>Neoptera</taxon>
        <taxon>Endopterygota</taxon>
        <taxon>Coleoptera</taxon>
        <taxon>Polyphaga</taxon>
        <taxon>Cucujiformia</taxon>
        <taxon>Chrysomeloidea</taxon>
        <taxon>Chrysomelidae</taxon>
        <taxon>Chrysomelinae</taxon>
        <taxon>Doryphorini</taxon>
        <taxon>Leptinotarsa</taxon>
    </lineage>
</organism>
<protein>
    <recommendedName>
        <fullName>Oviductal motility-stimulating peptide</fullName>
    </recommendedName>
    <alternativeName>
        <fullName>LeD-OVM</fullName>
    </alternativeName>
</protein>
<evidence type="ECO:0000269" key="1">
    <source>
    </source>
</evidence>
<name>OVM_LEPDE</name>
<reference key="1">
    <citation type="journal article" date="1991" name="Peptides">
        <title>Isolation, identification and synthesis of novel oviductal motility stimulating head peptide in the Colorado potato beetle, Leptinotarsa decemlineata.</title>
        <authorList>
            <person name="Spittaels K."/>
            <person name="Schoofs L."/>
            <person name="Grauwels L."/>
            <person name="Smet H."/>
            <person name="van Damme J."/>
            <person name="Proost P."/>
            <person name="Torrekens S."/>
            <person name="de Loof A."/>
        </authorList>
    </citation>
    <scope>PROTEIN SEQUENCE</scope>
    <scope>AMIDATION AT GLU-6</scope>
    <scope>SYNTHESIS</scope>
    <source>
        <tissue>Head</tissue>
    </source>
</reference>